<evidence type="ECO:0000250" key="1">
    <source>
        <dbReference type="UniProtKB" id="P02086"/>
    </source>
</evidence>
<evidence type="ECO:0000250" key="2">
    <source>
        <dbReference type="UniProtKB" id="P02089"/>
    </source>
</evidence>
<evidence type="ECO:0000250" key="3">
    <source>
        <dbReference type="UniProtKB" id="P02091"/>
    </source>
</evidence>
<evidence type="ECO:0000250" key="4">
    <source>
        <dbReference type="UniProtKB" id="P11517"/>
    </source>
</evidence>
<evidence type="ECO:0000250" key="5">
    <source>
        <dbReference type="UniProtKB" id="P80044"/>
    </source>
</evidence>
<evidence type="ECO:0000255" key="6">
    <source>
        <dbReference type="PROSITE-ProRule" id="PRU00238"/>
    </source>
</evidence>
<evidence type="ECO:0000269" key="7">
    <source>
    </source>
</evidence>
<evidence type="ECO:0000269" key="8">
    <source>
    </source>
</evidence>
<evidence type="ECO:0000269" key="9">
    <source>
    </source>
</evidence>
<evidence type="ECO:0000269" key="10">
    <source>
    </source>
</evidence>
<evidence type="ECO:0000305" key="11"/>
<evidence type="ECO:0007744" key="12">
    <source>
        <dbReference type="PDB" id="1JEB"/>
    </source>
</evidence>
<evidence type="ECO:0007744" key="13">
    <source>
        <dbReference type="PDB" id="3HRW"/>
    </source>
</evidence>
<evidence type="ECO:0007744" key="14">
    <source>
    </source>
</evidence>
<evidence type="ECO:0007744" key="15">
    <source>
    </source>
</evidence>
<evidence type="ECO:0007744" key="16">
    <source>
    </source>
</evidence>
<evidence type="ECO:0007829" key="17">
    <source>
        <dbReference type="PDB" id="1JEB"/>
    </source>
</evidence>
<feature type="initiator methionine" description="Removed" evidence="1">
    <location>
        <position position="1"/>
    </location>
</feature>
<feature type="chain" id="PRO_0000053024" description="Hemoglobin subunit beta-1">
    <location>
        <begin position="2"/>
        <end position="147"/>
    </location>
</feature>
<feature type="domain" description="Globin" evidence="6">
    <location>
        <begin position="3"/>
        <end position="147"/>
    </location>
</feature>
<feature type="binding site" description="distal binding residue" evidence="5">
    <location>
        <position position="64"/>
    </location>
    <ligand>
        <name>heme b</name>
        <dbReference type="ChEBI" id="CHEBI:60344"/>
    </ligand>
    <ligandPart>
        <name>Fe</name>
        <dbReference type="ChEBI" id="CHEBI:18248"/>
    </ligandPart>
</feature>
<feature type="binding site" description="proximal binding residue" evidence="8 12 13">
    <location>
        <position position="93"/>
    </location>
    <ligand>
        <name>heme b</name>
        <dbReference type="ChEBI" id="CHEBI:60344"/>
    </ligand>
    <ligandPart>
        <name>Fe</name>
        <dbReference type="ChEBI" id="CHEBI:18248"/>
    </ligandPart>
</feature>
<feature type="modified residue" description="N-acetylvaline" evidence="1">
    <location>
        <position position="2"/>
    </location>
</feature>
<feature type="modified residue" description="N6-succinyllysine" evidence="16">
    <location>
        <position position="18"/>
    </location>
</feature>
<feature type="modified residue" description="Phosphoserine" evidence="14 15">
    <location>
        <position position="21"/>
    </location>
</feature>
<feature type="modified residue" description="Phosphoserine" evidence="3">
    <location>
        <position position="45"/>
    </location>
</feature>
<feature type="modified residue" description="Phosphoserine" evidence="3">
    <location>
        <position position="51"/>
    </location>
</feature>
<feature type="modified residue" description="N6-succinyllysine" evidence="2">
    <location>
        <position position="60"/>
    </location>
</feature>
<feature type="modified residue" description="Asymmetric dimethylarginine" evidence="2">
    <location>
        <position position="105"/>
    </location>
</feature>
<feature type="modified residue" description="Phosphothreonine" evidence="4">
    <location>
        <position position="124"/>
    </location>
</feature>
<feature type="sequence variant" description="In allele S and allele W1." evidence="7 9 10">
    <original>C</original>
    <variation>G</variation>
    <location>
        <position position="14"/>
    </location>
</feature>
<feature type="sequence variant" description="In allele S." evidence="9 10">
    <original>S</original>
    <variation>A</variation>
    <location>
        <position position="21"/>
    </location>
</feature>
<feature type="sequence variant" description="In allele W1." evidence="7 10">
    <original>D</original>
    <variation>E</variation>
    <location>
        <position position="74"/>
    </location>
</feature>
<feature type="sequence variant" description="In allele W1." evidence="7 10">
    <original>V</original>
    <variation>M</variation>
    <location>
        <position position="135"/>
    </location>
</feature>
<feature type="sequence variant" description="In allele S." evidence="9 10">
    <original>T</original>
    <variation>A</variation>
    <location>
        <position position="140"/>
    </location>
</feature>
<feature type="sequence conflict" description="In Ref. 6; BAB27362." evidence="11" ref="6">
    <original>L</original>
    <variation>Q</variation>
    <location>
        <position position="15"/>
    </location>
</feature>
<feature type="sequence conflict" description="In Ref. 6; BAB29299." evidence="11" ref="6">
    <original>T</original>
    <variation>A</variation>
    <location>
        <position position="39"/>
    </location>
</feature>
<feature type="sequence conflict" description="In Ref. 6; BAB27237." evidence="11" ref="6">
    <original>A</original>
    <variation>T</variation>
    <location>
        <position position="63"/>
    </location>
</feature>
<feature type="sequence conflict" description="In Ref. 3." evidence="11" ref="3">
    <original>E</original>
    <variation>Q</variation>
    <location>
        <position position="91"/>
    </location>
</feature>
<feature type="sequence conflict" description="In Ref. 6; BAB29299." evidence="11" ref="6">
    <original>N</original>
    <variation>S</variation>
    <location>
        <position position="109"/>
    </location>
</feature>
<feature type="helix" evidence="17">
    <location>
        <begin position="6"/>
        <end position="18"/>
    </location>
</feature>
<feature type="helix" evidence="17">
    <location>
        <begin position="21"/>
        <end position="35"/>
    </location>
</feature>
<feature type="helix" evidence="17">
    <location>
        <begin position="37"/>
        <end position="42"/>
    </location>
</feature>
<feature type="helix" evidence="17">
    <location>
        <begin position="52"/>
        <end position="56"/>
    </location>
</feature>
<feature type="helix" evidence="17">
    <location>
        <begin position="59"/>
        <end position="77"/>
    </location>
</feature>
<feature type="helix" evidence="17">
    <location>
        <begin position="82"/>
        <end position="94"/>
    </location>
</feature>
<feature type="turn" evidence="17">
    <location>
        <begin position="95"/>
        <end position="97"/>
    </location>
</feature>
<feature type="helix" evidence="17">
    <location>
        <begin position="102"/>
        <end position="119"/>
    </location>
</feature>
<feature type="helix" evidence="17">
    <location>
        <begin position="120"/>
        <end position="122"/>
    </location>
</feature>
<feature type="helix" evidence="17">
    <location>
        <begin position="125"/>
        <end position="143"/>
    </location>
</feature>
<dbReference type="EMBL" id="X14061">
    <property type="protein sequence ID" value="CAA32224.1"/>
    <property type="molecule type" value="Genomic_DNA"/>
</dbReference>
<dbReference type="EMBL" id="J00413">
    <property type="protein sequence ID" value="AAA37791.1"/>
    <property type="molecule type" value="Genomic_DNA"/>
</dbReference>
<dbReference type="EMBL" id="AB020013">
    <property type="protein sequence ID" value="BAA77353.1"/>
    <property type="molecule type" value="mRNA"/>
</dbReference>
<dbReference type="EMBL" id="AB020015">
    <property type="protein sequence ID" value="BAA77355.1"/>
    <property type="molecule type" value="mRNA"/>
</dbReference>
<dbReference type="EMBL" id="AK002258">
    <property type="protein sequence ID" value="BAB21971.1"/>
    <property type="molecule type" value="mRNA"/>
</dbReference>
<dbReference type="EMBL" id="AK002394">
    <property type="protein sequence ID" value="BAB22067.1"/>
    <property type="molecule type" value="mRNA"/>
</dbReference>
<dbReference type="EMBL" id="AK003096">
    <property type="protein sequence ID" value="BAB22562.1"/>
    <property type="molecule type" value="mRNA"/>
</dbReference>
<dbReference type="EMBL" id="AK003472">
    <property type="protein sequence ID" value="BAB22806.1"/>
    <property type="molecule type" value="mRNA"/>
</dbReference>
<dbReference type="EMBL" id="AK005442">
    <property type="protein sequence ID" value="BAB24036.1"/>
    <property type="molecule type" value="mRNA"/>
</dbReference>
<dbReference type="EMBL" id="AK005490">
    <property type="protein sequence ID" value="BAB24075.1"/>
    <property type="molecule type" value="mRNA"/>
</dbReference>
<dbReference type="EMBL" id="AK005496">
    <property type="protein sequence ID" value="BAB24080.1"/>
    <property type="molecule type" value="mRNA"/>
</dbReference>
<dbReference type="EMBL" id="AK010873">
    <property type="protein sequence ID" value="BAB27237.1"/>
    <property type="molecule type" value="mRNA"/>
</dbReference>
<dbReference type="EMBL" id="AK010902">
    <property type="protein sequence ID" value="BAB27255.1"/>
    <property type="molecule type" value="mRNA"/>
</dbReference>
<dbReference type="EMBL" id="AK010980">
    <property type="protein sequence ID" value="BAB27302.1"/>
    <property type="molecule type" value="mRNA"/>
</dbReference>
<dbReference type="EMBL" id="AK010981">
    <property type="protein sequence ID" value="BAB27303.1"/>
    <property type="molecule type" value="mRNA"/>
</dbReference>
<dbReference type="EMBL" id="AK010991">
    <property type="protein sequence ID" value="BAB27310.1"/>
    <property type="molecule type" value="mRNA"/>
</dbReference>
<dbReference type="EMBL" id="AK010993">
    <property type="protein sequence ID" value="BAB27312.1"/>
    <property type="molecule type" value="mRNA"/>
</dbReference>
<dbReference type="EMBL" id="AK011006">
    <property type="protein sequence ID" value="BAB27325.1"/>
    <property type="molecule type" value="mRNA"/>
</dbReference>
<dbReference type="EMBL" id="AK011013">
    <property type="protein sequence ID" value="BAB27331.1"/>
    <property type="molecule type" value="mRNA"/>
</dbReference>
<dbReference type="EMBL" id="AK011016">
    <property type="protein sequence ID" value="BAB27334.1"/>
    <property type="molecule type" value="mRNA"/>
</dbReference>
<dbReference type="EMBL" id="AK011027">
    <property type="protein sequence ID" value="BAB27343.1"/>
    <property type="molecule type" value="mRNA"/>
</dbReference>
<dbReference type="EMBL" id="AK011033">
    <property type="protein sequence ID" value="BAB27347.1"/>
    <property type="molecule type" value="mRNA"/>
</dbReference>
<dbReference type="EMBL" id="AK011050">
    <property type="protein sequence ID" value="BAB27360.1"/>
    <property type="molecule type" value="mRNA"/>
</dbReference>
<dbReference type="EMBL" id="AK011052">
    <property type="protein sequence ID" value="BAB27361.1"/>
    <property type="molecule type" value="mRNA"/>
</dbReference>
<dbReference type="EMBL" id="AK011053">
    <property type="protein sequence ID" value="BAB27362.1"/>
    <property type="molecule type" value="mRNA"/>
</dbReference>
<dbReference type="EMBL" id="AK011057">
    <property type="protein sequence ID" value="BAB27365.1"/>
    <property type="molecule type" value="mRNA"/>
</dbReference>
<dbReference type="EMBL" id="AK011067">
    <property type="protein sequence ID" value="BAB27374.1"/>
    <property type="molecule type" value="mRNA"/>
</dbReference>
<dbReference type="EMBL" id="AK011069">
    <property type="protein sequence ID" value="BAB27376.1"/>
    <property type="molecule type" value="mRNA"/>
</dbReference>
<dbReference type="EMBL" id="AK011075">
    <property type="protein sequence ID" value="BAB27380.1"/>
    <property type="molecule type" value="mRNA"/>
</dbReference>
<dbReference type="EMBL" id="AK011077">
    <property type="protein sequence ID" value="BAB27382.1"/>
    <property type="molecule type" value="mRNA"/>
</dbReference>
<dbReference type="EMBL" id="AK011083">
    <property type="protein sequence ID" value="BAB27387.1"/>
    <property type="molecule type" value="mRNA"/>
</dbReference>
<dbReference type="EMBL" id="AK011102">
    <property type="protein sequence ID" value="BAB27399.1"/>
    <property type="molecule type" value="mRNA"/>
</dbReference>
<dbReference type="EMBL" id="AK012551">
    <property type="protein sequence ID" value="BAB28311.1"/>
    <property type="molecule type" value="mRNA"/>
</dbReference>
<dbReference type="EMBL" id="AK014364">
    <property type="protein sequence ID" value="BAB29299.1"/>
    <property type="molecule type" value="mRNA"/>
</dbReference>
<dbReference type="EMBL" id="AK027903">
    <property type="protein sequence ID" value="BAC25655.1"/>
    <property type="molecule type" value="mRNA"/>
</dbReference>
<dbReference type="EMBL" id="AK027904">
    <property type="protein sequence ID" value="BAC25656.1"/>
    <property type="molecule type" value="mRNA"/>
</dbReference>
<dbReference type="EMBL" id="AK028067">
    <property type="protein sequence ID" value="BAC25734.1"/>
    <property type="molecule type" value="mRNA"/>
</dbReference>
<dbReference type="EMBL" id="AK088149">
    <property type="protein sequence ID" value="BAC40173.1"/>
    <property type="molecule type" value="mRNA"/>
</dbReference>
<dbReference type="EMBL" id="AK133714">
    <property type="protein sequence ID" value="BAE21794.1"/>
    <property type="molecule type" value="mRNA"/>
</dbReference>
<dbReference type="EMBL" id="AK147001">
    <property type="protein sequence ID" value="BAE27598.1"/>
    <property type="molecule type" value="mRNA"/>
</dbReference>
<dbReference type="EMBL" id="AK160629">
    <property type="protein sequence ID" value="BAE35926.1"/>
    <property type="molecule type" value="mRNA"/>
</dbReference>
<dbReference type="EMBL" id="AK161021">
    <property type="protein sequence ID" value="BAE36152.1"/>
    <property type="molecule type" value="mRNA"/>
</dbReference>
<dbReference type="EMBL" id="AK165490">
    <property type="protein sequence ID" value="BAE38217.1"/>
    <property type="molecule type" value="mRNA"/>
</dbReference>
<dbReference type="EMBL" id="AK167615">
    <property type="protein sequence ID" value="BAE39668.1"/>
    <property type="molecule type" value="mRNA"/>
</dbReference>
<dbReference type="EMBL" id="AK168412">
    <property type="protein sequence ID" value="BAE40327.1"/>
    <property type="molecule type" value="mRNA"/>
</dbReference>
<dbReference type="EMBL" id="AK168477">
    <property type="protein sequence ID" value="BAE40366.1"/>
    <property type="molecule type" value="mRNA"/>
</dbReference>
<dbReference type="EMBL" id="AK168562">
    <property type="protein sequence ID" value="BAE40435.1"/>
    <property type="molecule type" value="mRNA"/>
</dbReference>
<dbReference type="EMBL" id="AK168584">
    <property type="protein sequence ID" value="BAE40453.1"/>
    <property type="molecule type" value="mRNA"/>
</dbReference>
<dbReference type="EMBL" id="AK168819">
    <property type="protein sequence ID" value="BAE40646.1"/>
    <property type="molecule type" value="mRNA"/>
</dbReference>
<dbReference type="EMBL" id="AK168826">
    <property type="protein sequence ID" value="BAE40653.1"/>
    <property type="molecule type" value="mRNA"/>
</dbReference>
<dbReference type="EMBL" id="AK168846">
    <property type="protein sequence ID" value="BAE40669.1"/>
    <property type="molecule type" value="mRNA"/>
</dbReference>
<dbReference type="EMBL" id="M19236">
    <property type="protein sequence ID" value="AAA37788.1"/>
    <property type="molecule type" value="mRNA"/>
</dbReference>
<dbReference type="EMBL" id="M10828">
    <property type="protein sequence ID" value="AAA37786.1"/>
    <property type="molecule type" value="Genomic_DNA"/>
</dbReference>
<dbReference type="EMBL" id="M10830">
    <property type="protein sequence ID" value="AAA37787.1"/>
    <property type="molecule type" value="Genomic_DNA"/>
</dbReference>
<dbReference type="EMBL" id="M10829">
    <property type="protein sequence ID" value="AAA37787.1"/>
    <property type="status" value="JOINED"/>
    <property type="molecule type" value="Genomic_DNA"/>
</dbReference>
<dbReference type="EMBL" id="M10688">
    <property type="protein sequence ID" value="AAA37790.1"/>
    <property type="molecule type" value="Genomic_DNA"/>
</dbReference>
<dbReference type="PIR" id="A90790">
    <property type="entry name" value="HBMS"/>
</dbReference>
<dbReference type="RefSeq" id="NP_001265090.1">
    <property type="nucleotide sequence ID" value="NM_001278161.1"/>
</dbReference>
<dbReference type="PDB" id="1JEB">
    <property type="method" value="X-ray"/>
    <property type="resolution" value="2.10 A"/>
    <property type="chains" value="B/D=2-147"/>
</dbReference>
<dbReference type="PDB" id="3HRW">
    <property type="method" value="X-ray"/>
    <property type="resolution" value="2.80 A"/>
    <property type="chains" value="B/D=2-147"/>
</dbReference>
<dbReference type="PDBsum" id="1JEB"/>
<dbReference type="PDBsum" id="3HRW"/>
<dbReference type="SMR" id="P02088"/>
<dbReference type="BioGRID" id="1639840">
    <property type="interactions" value="5"/>
</dbReference>
<dbReference type="BioGRID" id="200219">
    <property type="interactions" value="11"/>
</dbReference>
<dbReference type="BioGRID" id="3405151">
    <property type="interactions" value="3"/>
</dbReference>
<dbReference type="ComplexPortal" id="CPX-2922">
    <property type="entry name" value="Hemoglobin HbA complex, variant HBB1"/>
</dbReference>
<dbReference type="FunCoup" id="P02088">
    <property type="interactions" value="14"/>
</dbReference>
<dbReference type="IntAct" id="P02088">
    <property type="interactions" value="7"/>
</dbReference>
<dbReference type="MINT" id="P02088"/>
<dbReference type="STRING" id="10090.ENSMUSP00000023934"/>
<dbReference type="CarbonylDB" id="P02088"/>
<dbReference type="GlyGen" id="P02088">
    <property type="glycosylation" value="1 site, 1 O-linked glycan (1 site)"/>
</dbReference>
<dbReference type="iPTMnet" id="P02088"/>
<dbReference type="PhosphoSitePlus" id="P02088"/>
<dbReference type="SwissPalm" id="P02088"/>
<dbReference type="REPRODUCTION-2DPAGE" id="IPI00553333"/>
<dbReference type="REPRODUCTION-2DPAGE" id="P02088"/>
<dbReference type="jPOST" id="P02088"/>
<dbReference type="PaxDb" id="10090-ENSMUSP00000023934"/>
<dbReference type="PeptideAtlas" id="P02088"/>
<dbReference type="ProteomicsDB" id="269721"/>
<dbReference type="DNASU" id="15129"/>
<dbReference type="GeneID" id="15129"/>
<dbReference type="KEGG" id="mmu:100503605"/>
<dbReference type="KEGG" id="mmu:101488143"/>
<dbReference type="KEGG" id="mmu:15129"/>
<dbReference type="UCSC" id="uc009iuq.3">
    <property type="organism name" value="mouse"/>
</dbReference>
<dbReference type="AGR" id="MGI:96021"/>
<dbReference type="CTD" id="100503605"/>
<dbReference type="CTD" id="101488143"/>
<dbReference type="CTD" id="15129"/>
<dbReference type="MGI" id="MGI:96021">
    <property type="gene designation" value="Hbb-b1"/>
</dbReference>
<dbReference type="eggNOG" id="KOG3378">
    <property type="taxonomic scope" value="Eukaryota"/>
</dbReference>
<dbReference type="InParanoid" id="P02088"/>
<dbReference type="OrthoDB" id="9886081at2759"/>
<dbReference type="PhylomeDB" id="P02088"/>
<dbReference type="BioGRID-ORCS" id="100503605">
    <property type="hits" value="0 hits in 23 CRISPR screens"/>
</dbReference>
<dbReference type="BioGRID-ORCS" id="101488143">
    <property type="hits" value="0 hits in 23 CRISPR screens"/>
</dbReference>
<dbReference type="BioGRID-ORCS" id="15129">
    <property type="hits" value="3 hits in 18 CRISPR screens"/>
</dbReference>
<dbReference type="EvolutionaryTrace" id="P02088"/>
<dbReference type="PRO" id="PR:P02088"/>
<dbReference type="Proteomes" id="UP000000589">
    <property type="component" value="Unplaced"/>
</dbReference>
<dbReference type="RNAct" id="P02088">
    <property type="molecule type" value="protein"/>
</dbReference>
<dbReference type="GO" id="GO:0005833">
    <property type="term" value="C:hemoglobin complex"/>
    <property type="evidence" value="ECO:0000314"/>
    <property type="project" value="MGI"/>
</dbReference>
<dbReference type="GO" id="GO:0043209">
    <property type="term" value="C:myelin sheath"/>
    <property type="evidence" value="ECO:0007005"/>
    <property type="project" value="UniProtKB"/>
</dbReference>
<dbReference type="GO" id="GO:0020037">
    <property type="term" value="F:heme binding"/>
    <property type="evidence" value="ECO:0007669"/>
    <property type="project" value="InterPro"/>
</dbReference>
<dbReference type="GO" id="GO:0046872">
    <property type="term" value="F:metal ion binding"/>
    <property type="evidence" value="ECO:0007669"/>
    <property type="project" value="UniProtKB-KW"/>
</dbReference>
<dbReference type="GO" id="GO:0019825">
    <property type="term" value="F:oxygen binding"/>
    <property type="evidence" value="ECO:0007669"/>
    <property type="project" value="InterPro"/>
</dbReference>
<dbReference type="GO" id="GO:0005344">
    <property type="term" value="F:oxygen carrier activity"/>
    <property type="evidence" value="ECO:0000315"/>
    <property type="project" value="MGI"/>
</dbReference>
<dbReference type="GO" id="GO:0015670">
    <property type="term" value="P:carbon dioxide transport"/>
    <property type="evidence" value="ECO:0000303"/>
    <property type="project" value="ComplexPortal"/>
</dbReference>
<dbReference type="GO" id="GO:0048821">
    <property type="term" value="P:erythrocyte development"/>
    <property type="evidence" value="ECO:0000316"/>
    <property type="project" value="MGI"/>
</dbReference>
<dbReference type="GO" id="GO:0030097">
    <property type="term" value="P:hemopoiesis"/>
    <property type="evidence" value="ECO:0000315"/>
    <property type="project" value="MGI"/>
</dbReference>
<dbReference type="GO" id="GO:0030185">
    <property type="term" value="P:nitric oxide transport"/>
    <property type="evidence" value="ECO:0000266"/>
    <property type="project" value="ComplexPortal"/>
</dbReference>
<dbReference type="GO" id="GO:0015671">
    <property type="term" value="P:oxygen transport"/>
    <property type="evidence" value="ECO:0000315"/>
    <property type="project" value="MGI"/>
</dbReference>
<dbReference type="CDD" id="cd08925">
    <property type="entry name" value="Hb-beta-like"/>
    <property type="match status" value="1"/>
</dbReference>
<dbReference type="FunFam" id="1.10.490.10:FF:000001">
    <property type="entry name" value="Hemoglobin subunit beta"/>
    <property type="match status" value="1"/>
</dbReference>
<dbReference type="Gene3D" id="1.10.490.10">
    <property type="entry name" value="Globins"/>
    <property type="match status" value="1"/>
</dbReference>
<dbReference type="InterPro" id="IPR000971">
    <property type="entry name" value="Globin"/>
</dbReference>
<dbReference type="InterPro" id="IPR009050">
    <property type="entry name" value="Globin-like_sf"/>
</dbReference>
<dbReference type="InterPro" id="IPR012292">
    <property type="entry name" value="Globin/Proto"/>
</dbReference>
<dbReference type="InterPro" id="IPR002337">
    <property type="entry name" value="Hemoglobin_b"/>
</dbReference>
<dbReference type="InterPro" id="IPR050056">
    <property type="entry name" value="Hemoglobin_oxygen_transport"/>
</dbReference>
<dbReference type="PANTHER" id="PTHR11442">
    <property type="entry name" value="HEMOGLOBIN FAMILY MEMBER"/>
    <property type="match status" value="1"/>
</dbReference>
<dbReference type="PANTHER" id="PTHR11442:SF42">
    <property type="entry name" value="HEMOGLOBIN SUBUNIT BETA"/>
    <property type="match status" value="1"/>
</dbReference>
<dbReference type="Pfam" id="PF00042">
    <property type="entry name" value="Globin"/>
    <property type="match status" value="1"/>
</dbReference>
<dbReference type="PRINTS" id="PR00814">
    <property type="entry name" value="BETAHAEM"/>
</dbReference>
<dbReference type="SUPFAM" id="SSF46458">
    <property type="entry name" value="Globin-like"/>
    <property type="match status" value="1"/>
</dbReference>
<dbReference type="PROSITE" id="PS01033">
    <property type="entry name" value="GLOBIN"/>
    <property type="match status" value="1"/>
</dbReference>
<organism>
    <name type="scientific">Mus musculus</name>
    <name type="common">Mouse</name>
    <dbReference type="NCBI Taxonomy" id="10090"/>
    <lineage>
        <taxon>Eukaryota</taxon>
        <taxon>Metazoa</taxon>
        <taxon>Chordata</taxon>
        <taxon>Craniata</taxon>
        <taxon>Vertebrata</taxon>
        <taxon>Euteleostomi</taxon>
        <taxon>Mammalia</taxon>
        <taxon>Eutheria</taxon>
        <taxon>Euarchontoglires</taxon>
        <taxon>Glires</taxon>
        <taxon>Rodentia</taxon>
        <taxon>Myomorpha</taxon>
        <taxon>Muroidea</taxon>
        <taxon>Muridae</taxon>
        <taxon>Murinae</taxon>
        <taxon>Mus</taxon>
        <taxon>Mus</taxon>
    </lineage>
</organism>
<reference key="1">
    <citation type="journal article" date="1989" name="J. Mol. Biol.">
        <title>Nucleotide sequence of the BALB/c mouse beta-globin complex.</title>
        <authorList>
            <person name="Shehee W.R."/>
            <person name="Loeb D.D."/>
            <person name="Adey N.B."/>
            <person name="Burton F.H."/>
            <person name="Casavant N.C."/>
            <person name="Cole P."/>
            <person name="Davies C.J."/>
            <person name="McGraw R.A."/>
            <person name="Schichman S.A."/>
            <person name="Severynse D.M."/>
            <person name="Voliva C.F."/>
            <person name="Weyter F.W."/>
            <person name="Wisely G.B."/>
            <person name="Edgell M.H."/>
            <person name="Hutchison C.A. III"/>
        </authorList>
    </citation>
    <scope>NUCLEOTIDE SEQUENCE [GENOMIC DNA]</scope>
</reference>
<reference key="2">
    <citation type="journal article" date="1979" name="Cell">
        <title>The evolution and sequence comparison of two recently diverged mouse chromosomal beta-globin genes.</title>
        <authorList>
            <person name="Konkel D.A."/>
            <person name="Maizel J.V. Jr."/>
            <person name="Leder P."/>
        </authorList>
    </citation>
    <scope>NUCLEOTIDE SEQUENCE [GENOMIC DNA]</scope>
    <source>
        <strain>BALB/cJ</strain>
    </source>
</reference>
<reference key="3">
    <citation type="journal article" date="1979" name="Science">
        <title>Comparison of total sequence of a cloned rabbit beta-globin gene and its flanking regions with a homologous mouse sequence.</title>
        <authorList>
            <person name="van Ooyen A."/>
            <person name="van den Berg J."/>
            <person name="Mantei N."/>
            <person name="Weissmann C."/>
        </authorList>
    </citation>
    <scope>NUCLEOTIDE SEQUENCE [GENOMIC DNA]</scope>
</reference>
<reference key="4">
    <citation type="journal article" date="1985" name="Mol. Biol. Evol.">
        <title>Evolution of the mouse beta-globin genes: a recent gene conversion in the Hbbs haplotype.</title>
        <authorList>
            <person name="Erhart M.A."/>
            <person name="Simons K.S."/>
            <person name="Weaver S."/>
        </authorList>
    </citation>
    <scope>NUCLEOTIDE SEQUENCE [GENOMIC DNA] (ALLELE S)</scope>
    <source>
        <strain>C57BL/10</strain>
    </source>
</reference>
<reference key="5">
    <citation type="journal article" date="1999" name="Mamm. Genome">
        <title>Nucleotide sequences of the mouse globin beta gene cDNAs in a wild derived new haplotype Hbb(w1).</title>
        <authorList>
            <person name="Ueda Y."/>
            <person name="Miyashita N."/>
            <person name="Imai K."/>
            <person name="Yamaguchi Y."/>
            <person name="Takamura K."/>
            <person name="Notohara M."/>
            <person name="Shiroishi T."/>
            <person name="Kawashima T."/>
            <person name="Ning L."/>
            <person name="Wang C."/>
            <person name="Wu X."/>
            <person name="Moriwaki K."/>
        </authorList>
    </citation>
    <scope>NUCLEOTIDE SEQUENCE [MRNA] (ALLELES P AND W1)</scope>
</reference>
<reference key="6">
    <citation type="journal article" date="2005" name="Science">
        <title>The transcriptional landscape of the mammalian genome.</title>
        <authorList>
            <person name="Carninci P."/>
            <person name="Kasukawa T."/>
            <person name="Katayama S."/>
            <person name="Gough J."/>
            <person name="Frith M.C."/>
            <person name="Maeda N."/>
            <person name="Oyama R."/>
            <person name="Ravasi T."/>
            <person name="Lenhard B."/>
            <person name="Wells C."/>
            <person name="Kodzius R."/>
            <person name="Shimokawa K."/>
            <person name="Bajic V.B."/>
            <person name="Brenner S.E."/>
            <person name="Batalov S."/>
            <person name="Forrest A.R."/>
            <person name="Zavolan M."/>
            <person name="Davis M.J."/>
            <person name="Wilming L.G."/>
            <person name="Aidinis V."/>
            <person name="Allen J.E."/>
            <person name="Ambesi-Impiombato A."/>
            <person name="Apweiler R."/>
            <person name="Aturaliya R.N."/>
            <person name="Bailey T.L."/>
            <person name="Bansal M."/>
            <person name="Baxter L."/>
            <person name="Beisel K.W."/>
            <person name="Bersano T."/>
            <person name="Bono H."/>
            <person name="Chalk A.M."/>
            <person name="Chiu K.P."/>
            <person name="Choudhary V."/>
            <person name="Christoffels A."/>
            <person name="Clutterbuck D.R."/>
            <person name="Crowe M.L."/>
            <person name="Dalla E."/>
            <person name="Dalrymple B.P."/>
            <person name="de Bono B."/>
            <person name="Della Gatta G."/>
            <person name="di Bernardo D."/>
            <person name="Down T."/>
            <person name="Engstrom P."/>
            <person name="Fagiolini M."/>
            <person name="Faulkner G."/>
            <person name="Fletcher C.F."/>
            <person name="Fukushima T."/>
            <person name="Furuno M."/>
            <person name="Futaki S."/>
            <person name="Gariboldi M."/>
            <person name="Georgii-Hemming P."/>
            <person name="Gingeras T.R."/>
            <person name="Gojobori T."/>
            <person name="Green R.E."/>
            <person name="Gustincich S."/>
            <person name="Harbers M."/>
            <person name="Hayashi Y."/>
            <person name="Hensch T.K."/>
            <person name="Hirokawa N."/>
            <person name="Hill D."/>
            <person name="Huminiecki L."/>
            <person name="Iacono M."/>
            <person name="Ikeo K."/>
            <person name="Iwama A."/>
            <person name="Ishikawa T."/>
            <person name="Jakt M."/>
            <person name="Kanapin A."/>
            <person name="Katoh M."/>
            <person name="Kawasawa Y."/>
            <person name="Kelso J."/>
            <person name="Kitamura H."/>
            <person name="Kitano H."/>
            <person name="Kollias G."/>
            <person name="Krishnan S.P."/>
            <person name="Kruger A."/>
            <person name="Kummerfeld S.K."/>
            <person name="Kurochkin I.V."/>
            <person name="Lareau L.F."/>
            <person name="Lazarevic D."/>
            <person name="Lipovich L."/>
            <person name="Liu J."/>
            <person name="Liuni S."/>
            <person name="McWilliam S."/>
            <person name="Madan Babu M."/>
            <person name="Madera M."/>
            <person name="Marchionni L."/>
            <person name="Matsuda H."/>
            <person name="Matsuzawa S."/>
            <person name="Miki H."/>
            <person name="Mignone F."/>
            <person name="Miyake S."/>
            <person name="Morris K."/>
            <person name="Mottagui-Tabar S."/>
            <person name="Mulder N."/>
            <person name="Nakano N."/>
            <person name="Nakauchi H."/>
            <person name="Ng P."/>
            <person name="Nilsson R."/>
            <person name="Nishiguchi S."/>
            <person name="Nishikawa S."/>
            <person name="Nori F."/>
            <person name="Ohara O."/>
            <person name="Okazaki Y."/>
            <person name="Orlando V."/>
            <person name="Pang K.C."/>
            <person name="Pavan W.J."/>
            <person name="Pavesi G."/>
            <person name="Pesole G."/>
            <person name="Petrovsky N."/>
            <person name="Piazza S."/>
            <person name="Reed J."/>
            <person name="Reid J.F."/>
            <person name="Ring B.Z."/>
            <person name="Ringwald M."/>
            <person name="Rost B."/>
            <person name="Ruan Y."/>
            <person name="Salzberg S.L."/>
            <person name="Sandelin A."/>
            <person name="Schneider C."/>
            <person name="Schoenbach C."/>
            <person name="Sekiguchi K."/>
            <person name="Semple C.A."/>
            <person name="Seno S."/>
            <person name="Sessa L."/>
            <person name="Sheng Y."/>
            <person name="Shibata Y."/>
            <person name="Shimada H."/>
            <person name="Shimada K."/>
            <person name="Silva D."/>
            <person name="Sinclair B."/>
            <person name="Sperling S."/>
            <person name="Stupka E."/>
            <person name="Sugiura K."/>
            <person name="Sultana R."/>
            <person name="Takenaka Y."/>
            <person name="Taki K."/>
            <person name="Tammoja K."/>
            <person name="Tan S.L."/>
            <person name="Tang S."/>
            <person name="Taylor M.S."/>
            <person name="Tegner J."/>
            <person name="Teichmann S.A."/>
            <person name="Ueda H.R."/>
            <person name="van Nimwegen E."/>
            <person name="Verardo R."/>
            <person name="Wei C.L."/>
            <person name="Yagi K."/>
            <person name="Yamanishi H."/>
            <person name="Zabarovsky E."/>
            <person name="Zhu S."/>
            <person name="Zimmer A."/>
            <person name="Hide W."/>
            <person name="Bult C."/>
            <person name="Grimmond S.M."/>
            <person name="Teasdale R.D."/>
            <person name="Liu E.T."/>
            <person name="Brusic V."/>
            <person name="Quackenbush J."/>
            <person name="Wahlestedt C."/>
            <person name="Mattick J.S."/>
            <person name="Hume D.A."/>
            <person name="Kai C."/>
            <person name="Sasaki D."/>
            <person name="Tomaru Y."/>
            <person name="Fukuda S."/>
            <person name="Kanamori-Katayama M."/>
            <person name="Suzuki M."/>
            <person name="Aoki J."/>
            <person name="Arakawa T."/>
            <person name="Iida J."/>
            <person name="Imamura K."/>
            <person name="Itoh M."/>
            <person name="Kato T."/>
            <person name="Kawaji H."/>
            <person name="Kawagashira N."/>
            <person name="Kawashima T."/>
            <person name="Kojima M."/>
            <person name="Kondo S."/>
            <person name="Konno H."/>
            <person name="Nakano K."/>
            <person name="Ninomiya N."/>
            <person name="Nishio T."/>
            <person name="Okada M."/>
            <person name="Plessy C."/>
            <person name="Shibata K."/>
            <person name="Shiraki T."/>
            <person name="Suzuki S."/>
            <person name="Tagami M."/>
            <person name="Waki K."/>
            <person name="Watahiki A."/>
            <person name="Okamura-Oho Y."/>
            <person name="Suzuki H."/>
            <person name="Kawai J."/>
            <person name="Hayashizaki Y."/>
        </authorList>
    </citation>
    <scope>NUCLEOTIDE SEQUENCE [LARGE SCALE MRNA]</scope>
    <source>
        <strain>C57BL/6J</strain>
        <strain>NOD</strain>
        <tissue>Head</tissue>
        <tissue>Heart</tissue>
        <tissue>Kidney</tissue>
        <tissue>Liver</tissue>
        <tissue>Placenta</tissue>
        <tissue>Spleen</tissue>
        <tissue>Stomach</tissue>
        <tissue>Thymus</tissue>
    </source>
</reference>
<reference key="7">
    <citation type="submission" date="2009-01" db="UniProtKB">
        <authorList>
            <person name="Lubec G."/>
            <person name="Klug S."/>
            <person name="Kang S.U."/>
            <person name="Sunyer B."/>
            <person name="Chen W.-Q."/>
        </authorList>
    </citation>
    <scope>PROTEIN SEQUENCE OF 19-41; 32-60 AND 67-145</scope>
    <scope>IDENTIFICATION BY MASS SPECTROMETRY</scope>
    <source>
        <strain>C57BL/6J</strain>
        <strain>OF1</strain>
        <tissue>Brain</tissue>
        <tissue>Hippocampus</tissue>
    </source>
</reference>
<reference key="8">
    <citation type="journal article" date="1978" name="Cold Spring Harb. Symp. Quant. Biol.">
        <title>Characterization and kinetics of synthesis of 15S beta-globin RNA, a putative precursor of beta-globin mRNA.</title>
        <authorList>
            <person name="Curtis P.J."/>
            <person name="Mantei N."/>
            <person name="Weissmann C."/>
        </authorList>
    </citation>
    <scope>NUCLEOTIDE SEQUENCE [MRNA] OF 86-109</scope>
</reference>
<reference key="9">
    <citation type="journal article" date="1978" name="Nature">
        <title>Comparison of cloned rabbit and mouse beta-globin genes showing strong evolutionary divergence of two homologous pairs of introns.</title>
        <authorList>
            <person name="van den Berg J."/>
            <person name="van Ooyen A."/>
            <person name="Mantei N."/>
            <person name="Schamboeck A."/>
            <person name="Grosveld G."/>
            <person name="Flavell R.A."/>
            <person name="Weissmann C."/>
        </authorList>
    </citation>
    <scope>NUCLEOTIDE SEQUENCE [GENOMIC DNA] OF 28-44 AND 100-115</scope>
</reference>
<reference key="10">
    <citation type="journal article" date="1978" name="Proc. Natl. Acad. Sci. U.S.A.">
        <title>Intervening sequence of DNA identified in the structural portion of a mouse beta-globin gene.</title>
        <authorList>
            <person name="Tilghman S.M."/>
            <person name="Tiemeier D.C."/>
            <person name="Seidman J.G."/>
            <person name="Peterlin B.M."/>
            <person name="Sullivan M."/>
            <person name="Maizel J.V. Jr."/>
            <person name="Leder P."/>
        </authorList>
    </citation>
    <scope>NUCLEOTIDE SEQUENCE [GENOMIC DNA] OF 94-105</scope>
</reference>
<reference key="11">
    <citation type="journal article" date="2007" name="Proc. Natl. Acad. Sci. U.S.A.">
        <title>Large-scale phosphorylation analysis of mouse liver.</title>
        <authorList>
            <person name="Villen J."/>
            <person name="Beausoleil S.A."/>
            <person name="Gerber S.A."/>
            <person name="Gygi S.P."/>
        </authorList>
    </citation>
    <scope>PHOSPHORYLATION [LARGE SCALE ANALYSIS] AT SER-21</scope>
    <scope>IDENTIFICATION BY MASS SPECTROMETRY [LARGE SCALE ANALYSIS]</scope>
    <source>
        <tissue>Liver</tissue>
    </source>
</reference>
<reference key="12">
    <citation type="journal article" date="2010" name="Cell">
        <title>A tissue-specific atlas of mouse protein phosphorylation and expression.</title>
        <authorList>
            <person name="Huttlin E.L."/>
            <person name="Jedrychowski M.P."/>
            <person name="Elias J.E."/>
            <person name="Goswami T."/>
            <person name="Rad R."/>
            <person name="Beausoleil S.A."/>
            <person name="Villen J."/>
            <person name="Haas W."/>
            <person name="Sowa M.E."/>
            <person name="Gygi S.P."/>
        </authorList>
    </citation>
    <scope>PHOSPHORYLATION [LARGE SCALE ANALYSIS] AT SER-21</scope>
    <scope>IDENTIFICATION BY MASS SPECTROMETRY [LARGE SCALE ANALYSIS]</scope>
    <source>
        <tissue>Brain</tissue>
        <tissue>Brown adipose tissue</tissue>
        <tissue>Heart</tissue>
        <tissue>Kidney</tissue>
        <tissue>Liver</tissue>
        <tissue>Lung</tissue>
        <tissue>Pancreas</tissue>
        <tissue>Spleen</tissue>
        <tissue>Testis</tissue>
    </source>
</reference>
<reference key="13">
    <citation type="journal article" date="2013" name="Mol. Cell">
        <title>SIRT5-mediated lysine desuccinylation impacts diverse metabolic pathways.</title>
        <authorList>
            <person name="Park J."/>
            <person name="Chen Y."/>
            <person name="Tishkoff D.X."/>
            <person name="Peng C."/>
            <person name="Tan M."/>
            <person name="Dai L."/>
            <person name="Xie Z."/>
            <person name="Zhang Y."/>
            <person name="Zwaans B.M."/>
            <person name="Skinner M.E."/>
            <person name="Lombard D.B."/>
            <person name="Zhao Y."/>
        </authorList>
    </citation>
    <scope>SUCCINYLATION [LARGE SCALE ANALYSIS] AT LYS-18</scope>
    <scope>IDENTIFICATION BY MASS SPECTROMETRY [LARGE SCALE ANALYSIS]</scope>
    <source>
        <tissue>Liver</tissue>
    </source>
</reference>
<reference key="14">
    <citation type="journal article" date="2001" name="Biochemistry">
        <title>The role of beta chains in the control of the hemoglobin oxygen binding function: chimeric human/mouse proteins, structure, and function.</title>
        <authorList>
            <person name="Kidd R.D."/>
            <person name="Russell J.E."/>
            <person name="Watmough N.J."/>
            <person name="Baker E.N."/>
            <person name="Brittain T."/>
        </authorList>
    </citation>
    <scope>X-RAY CRYSTALLOGRAPHY (2.10 ANGSTROMS) OF 2-147 IN COMPLEX WITH HEME</scope>
</reference>
<reference key="15">
    <citation type="journal article" date="1976" name="Biochem. J.">
        <title>Mouse haemoglobin beta chains. Comparative sequence data on adult major and minor beta chains from two species, Mus musculus and Mus cervicolor.</title>
        <authorList>
            <person name="Gilman J.G."/>
        </authorList>
    </citation>
    <scope>VARIANTS ALLELIC</scope>
</reference>
<name>HBB1_MOUSE</name>
<accession>P02088</accession>
<accession>Q54AI0</accession>
<accession>Q91V86</accession>
<accession>Q9CRZ2</accession>
<accession>Q9CXH5</accession>
<accession>Q9CY12</accession>
<accession>Q9CY54</accession>
<accession>Q9R0S6</accession>
<comment type="function">
    <text>Involved in oxygen transport from the lung to the various peripheral tissues.</text>
</comment>
<comment type="subunit">
    <text>Heterotetramer of two alpha chains and two beta chains.</text>
</comment>
<comment type="tissue specificity">
    <text>Red blood cells.</text>
</comment>
<comment type="polymorphism">
    <text evidence="7 9 10">Inbred mouse strains possess 1 of 4 alleles at the HBB locus: D (diffuse), S (single), P and W1. The D and P alleles are actually closely linked doublets that coordinately express a major and a minor chain, the minor chain being slightly different in the two alleles. The S allele produces only 1 chain, it is characteristic of North American wild mice. The W1 allele is observed mainly in Northwestern China.</text>
</comment>
<comment type="miscellaneous">
    <text>The D-major sequence is shown. See also the entry for the beta D and P-minor chain.</text>
</comment>
<comment type="similarity">
    <text evidence="6">Belongs to the globin family.</text>
</comment>
<protein>
    <recommendedName>
        <fullName>Hemoglobin subunit beta-1</fullName>
    </recommendedName>
    <alternativeName>
        <fullName>Beta-1-globin</fullName>
    </alternativeName>
    <alternativeName>
        <fullName>Hemoglobin beta-1 chain</fullName>
    </alternativeName>
    <alternativeName>
        <fullName>Hemoglobin beta-major chain</fullName>
    </alternativeName>
</protein>
<proteinExistence type="evidence at protein level"/>
<gene>
    <name type="primary">Hbb-b1</name>
</gene>
<sequence>MVHLTDAEKAAVSCLWGKVNSDEVGGEALGRLLVVYPWTQRYFDSFGDLSSASAIMGNAKVKAHGKKVITAFNDGLNHLDSLKGTFASLSELHCDKLHVDPENFRLLGNMIVIVLGHHLGKDFTPAAQAAFQKVVAGVATALAHKYH</sequence>
<keyword id="KW-0002">3D-structure</keyword>
<keyword id="KW-0007">Acetylation</keyword>
<keyword id="KW-0903">Direct protein sequencing</keyword>
<keyword id="KW-0349">Heme</keyword>
<keyword id="KW-0408">Iron</keyword>
<keyword id="KW-0479">Metal-binding</keyword>
<keyword id="KW-0488">Methylation</keyword>
<keyword id="KW-0561">Oxygen transport</keyword>
<keyword id="KW-0597">Phosphoprotein</keyword>
<keyword id="KW-1185">Reference proteome</keyword>
<keyword id="KW-0813">Transport</keyword>